<gene>
    <name evidence="1" type="primary">cinA</name>
    <name type="ordered locus">SpyM51759</name>
</gene>
<organism>
    <name type="scientific">Streptococcus pyogenes serotype M5 (strain Manfredo)</name>
    <dbReference type="NCBI Taxonomy" id="160491"/>
    <lineage>
        <taxon>Bacteria</taxon>
        <taxon>Bacillati</taxon>
        <taxon>Bacillota</taxon>
        <taxon>Bacilli</taxon>
        <taxon>Lactobacillales</taxon>
        <taxon>Streptococcaceae</taxon>
        <taxon>Streptococcus</taxon>
    </lineage>
</organism>
<name>CINA_STRPG</name>
<proteinExistence type="inferred from homology"/>
<comment type="similarity">
    <text evidence="1">Belongs to the CinA family.</text>
</comment>
<reference key="1">
    <citation type="journal article" date="2007" name="J. Bacteriol.">
        <title>Complete genome of acute rheumatic fever-associated serotype M5 Streptococcus pyogenes strain Manfredo.</title>
        <authorList>
            <person name="Holden M.T.G."/>
            <person name="Scott A."/>
            <person name="Cherevach I."/>
            <person name="Chillingworth T."/>
            <person name="Churcher C."/>
            <person name="Cronin A."/>
            <person name="Dowd L."/>
            <person name="Feltwell T."/>
            <person name="Hamlin N."/>
            <person name="Holroyd S."/>
            <person name="Jagels K."/>
            <person name="Moule S."/>
            <person name="Mungall K."/>
            <person name="Quail M.A."/>
            <person name="Price C."/>
            <person name="Rabbinowitsch E."/>
            <person name="Sharp S."/>
            <person name="Skelton J."/>
            <person name="Whitehead S."/>
            <person name="Barrell B.G."/>
            <person name="Kehoe M."/>
            <person name="Parkhill J."/>
        </authorList>
    </citation>
    <scope>NUCLEOTIDE SEQUENCE [LARGE SCALE GENOMIC DNA]</scope>
    <source>
        <strain>Manfredo</strain>
    </source>
</reference>
<evidence type="ECO:0000255" key="1">
    <source>
        <dbReference type="HAMAP-Rule" id="MF_00226"/>
    </source>
</evidence>
<accession>A2RGU9</accession>
<sequence length="423" mass="45909">MKAELIAVGTEILTGQIVNTNAQFLSEKMAELGIDVYFQTAVGDNEERLLSVITTASQRSDLVILCGGLGPTKDDLTKQTLAKYLRKDLVYDEQACQKLDDFFAKRKPSSRTPNNERQAQVIEGSIPLPNKTGLAVGGFITVDGISYVVLPGPPSELKSMVNEELVPLLSKQYSTLYSKVLRFFGVGESQLVTVLSDFIENQTDPTIAPYAKTGEVTLRLSTKTENQALADKKLGQLEAQLLSRKTLEGQPLADVFYGYGEDNSLARETFELLVKYDKTITAAESLTAGLFQSTLASFPGASQVFNGGFVAYSMEEKAKMLGLPLEELKSHGVVSAYTAEGMAEQARLLTGADIGVSLTGVAGPDMLEEQPAGTVFIGLATQNKVESIKVLISGQSRLDVRYIATLHAFNMVRKTLLKLENLL</sequence>
<dbReference type="EMBL" id="AM295007">
    <property type="protein sequence ID" value="CAM31081.1"/>
    <property type="molecule type" value="Genomic_DNA"/>
</dbReference>
<dbReference type="RefSeq" id="WP_011018313.1">
    <property type="nucleotide sequence ID" value="NC_009332.1"/>
</dbReference>
<dbReference type="SMR" id="A2RGU9"/>
<dbReference type="KEGG" id="spf:SpyM51759"/>
<dbReference type="HOGENOM" id="CLU_030805_9_3_9"/>
<dbReference type="CDD" id="cd00885">
    <property type="entry name" value="cinA"/>
    <property type="match status" value="1"/>
</dbReference>
<dbReference type="Gene3D" id="3.30.70.2860">
    <property type="match status" value="1"/>
</dbReference>
<dbReference type="Gene3D" id="3.90.950.20">
    <property type="entry name" value="CinA-like"/>
    <property type="match status" value="1"/>
</dbReference>
<dbReference type="Gene3D" id="3.40.980.10">
    <property type="entry name" value="MoaB/Mog-like domain"/>
    <property type="match status" value="1"/>
</dbReference>
<dbReference type="HAMAP" id="MF_00226_B">
    <property type="entry name" value="CinA_B"/>
    <property type="match status" value="1"/>
</dbReference>
<dbReference type="InterPro" id="IPR050101">
    <property type="entry name" value="CinA"/>
</dbReference>
<dbReference type="InterPro" id="IPR036653">
    <property type="entry name" value="CinA-like_C"/>
</dbReference>
<dbReference type="InterPro" id="IPR008136">
    <property type="entry name" value="CinA_C"/>
</dbReference>
<dbReference type="InterPro" id="IPR041424">
    <property type="entry name" value="CinA_KH"/>
</dbReference>
<dbReference type="InterPro" id="IPR008135">
    <property type="entry name" value="Competence-induced_CinA"/>
</dbReference>
<dbReference type="InterPro" id="IPR036425">
    <property type="entry name" value="MoaB/Mog-like_dom_sf"/>
</dbReference>
<dbReference type="InterPro" id="IPR001453">
    <property type="entry name" value="MoaB/Mog_dom"/>
</dbReference>
<dbReference type="NCBIfam" id="TIGR00200">
    <property type="entry name" value="cinA_nterm"/>
    <property type="match status" value="1"/>
</dbReference>
<dbReference type="NCBIfam" id="TIGR00177">
    <property type="entry name" value="molyb_syn"/>
    <property type="match status" value="1"/>
</dbReference>
<dbReference type="NCBIfam" id="TIGR00199">
    <property type="entry name" value="PncC_domain"/>
    <property type="match status" value="1"/>
</dbReference>
<dbReference type="NCBIfam" id="NF001813">
    <property type="entry name" value="PRK00549.1"/>
    <property type="match status" value="1"/>
</dbReference>
<dbReference type="PANTHER" id="PTHR13939">
    <property type="entry name" value="NICOTINAMIDE-NUCLEOTIDE AMIDOHYDROLASE PNCC"/>
    <property type="match status" value="1"/>
</dbReference>
<dbReference type="PANTHER" id="PTHR13939:SF0">
    <property type="entry name" value="NMN AMIDOHYDROLASE-LIKE PROTEIN YFAY"/>
    <property type="match status" value="1"/>
</dbReference>
<dbReference type="Pfam" id="PF02464">
    <property type="entry name" value="CinA"/>
    <property type="match status" value="1"/>
</dbReference>
<dbReference type="Pfam" id="PF18146">
    <property type="entry name" value="CinA_KH"/>
    <property type="match status" value="1"/>
</dbReference>
<dbReference type="Pfam" id="PF00994">
    <property type="entry name" value="MoCF_biosynth"/>
    <property type="match status" value="1"/>
</dbReference>
<dbReference type="PIRSF" id="PIRSF006728">
    <property type="entry name" value="CinA"/>
    <property type="match status" value="1"/>
</dbReference>
<dbReference type="SMART" id="SM00852">
    <property type="entry name" value="MoCF_biosynth"/>
    <property type="match status" value="1"/>
</dbReference>
<dbReference type="SUPFAM" id="SSF142433">
    <property type="entry name" value="CinA-like"/>
    <property type="match status" value="1"/>
</dbReference>
<dbReference type="SUPFAM" id="SSF53218">
    <property type="entry name" value="Molybdenum cofactor biosynthesis proteins"/>
    <property type="match status" value="1"/>
</dbReference>
<protein>
    <recommendedName>
        <fullName evidence="1">Putative competence-damage inducible protein</fullName>
    </recommendedName>
</protein>
<feature type="chain" id="PRO_1000058735" description="Putative competence-damage inducible protein">
    <location>
        <begin position="1"/>
        <end position="423"/>
    </location>
</feature>